<evidence type="ECO:0000250" key="1"/>
<evidence type="ECO:0000305" key="2"/>
<feature type="initiator methionine" description="Removed" evidence="1">
    <location>
        <position position="1"/>
    </location>
</feature>
<feature type="chain" id="PRO_0000163453" description="Large ribosomal subunit protein bL19">
    <location>
        <begin position="2"/>
        <end position="115"/>
    </location>
</feature>
<sequence>MSNIIKQLEQEQMKQDVPSFRPGDTVEVKVWVVEGSKKRLQAFEGVVIAIRNRGLHSAFTVRKISNGEGVERVFQTHSPVVDSISVKRRGAVRKAKLYYLRERTGKAARIKERLN</sequence>
<organism>
    <name type="scientific">Escherichia coli O6:H1 (strain CFT073 / ATCC 700928 / UPEC)</name>
    <dbReference type="NCBI Taxonomy" id="199310"/>
    <lineage>
        <taxon>Bacteria</taxon>
        <taxon>Pseudomonadati</taxon>
        <taxon>Pseudomonadota</taxon>
        <taxon>Gammaproteobacteria</taxon>
        <taxon>Enterobacterales</taxon>
        <taxon>Enterobacteriaceae</taxon>
        <taxon>Escherichia</taxon>
    </lineage>
</organism>
<keyword id="KW-1185">Reference proteome</keyword>
<keyword id="KW-0687">Ribonucleoprotein</keyword>
<keyword id="KW-0689">Ribosomal protein</keyword>
<protein>
    <recommendedName>
        <fullName evidence="2">Large ribosomal subunit protein bL19</fullName>
    </recommendedName>
    <alternativeName>
        <fullName>50S ribosomal protein L19</fullName>
    </alternativeName>
</protein>
<comment type="function">
    <text evidence="1">This protein is located at the 30S-50S ribosomal subunit interface and may play a role in the structure and function of the aminoacyl-tRNA binding site.</text>
</comment>
<comment type="similarity">
    <text evidence="2">Belongs to the bacterial ribosomal protein bL19 family.</text>
</comment>
<gene>
    <name type="primary">rplS</name>
    <name type="ordered locus">c3127</name>
</gene>
<accession>P0A7K7</accession>
<accession>P02420</accession>
<reference key="1">
    <citation type="journal article" date="2002" name="Proc. Natl. Acad. Sci. U.S.A.">
        <title>Extensive mosaic structure revealed by the complete genome sequence of uropathogenic Escherichia coli.</title>
        <authorList>
            <person name="Welch R.A."/>
            <person name="Burland V."/>
            <person name="Plunkett G. III"/>
            <person name="Redford P."/>
            <person name="Roesch P."/>
            <person name="Rasko D."/>
            <person name="Buckles E.L."/>
            <person name="Liou S.-R."/>
            <person name="Boutin A."/>
            <person name="Hackett J."/>
            <person name="Stroud D."/>
            <person name="Mayhew G.F."/>
            <person name="Rose D.J."/>
            <person name="Zhou S."/>
            <person name="Schwartz D.C."/>
            <person name="Perna N.T."/>
            <person name="Mobley H.L.T."/>
            <person name="Donnenberg M.S."/>
            <person name="Blattner F.R."/>
        </authorList>
    </citation>
    <scope>NUCLEOTIDE SEQUENCE [LARGE SCALE GENOMIC DNA]</scope>
    <source>
        <strain>CFT073 / ATCC 700928 / UPEC</strain>
    </source>
</reference>
<name>RL19_ECOL6</name>
<dbReference type="EMBL" id="AE014075">
    <property type="protein sequence ID" value="AAN81577.1"/>
    <property type="molecule type" value="Genomic_DNA"/>
</dbReference>
<dbReference type="RefSeq" id="WP_000065253.1">
    <property type="nucleotide sequence ID" value="NZ_CP051263.1"/>
</dbReference>
<dbReference type="SMR" id="P0A7K7"/>
<dbReference type="STRING" id="199310.c3127"/>
<dbReference type="GeneID" id="93774456"/>
<dbReference type="KEGG" id="ecc:c3127"/>
<dbReference type="eggNOG" id="COG0335">
    <property type="taxonomic scope" value="Bacteria"/>
</dbReference>
<dbReference type="HOGENOM" id="CLU_103507_2_1_6"/>
<dbReference type="BioCyc" id="ECOL199310:C3127-MONOMER"/>
<dbReference type="Proteomes" id="UP000001410">
    <property type="component" value="Chromosome"/>
</dbReference>
<dbReference type="GO" id="GO:0022625">
    <property type="term" value="C:cytosolic large ribosomal subunit"/>
    <property type="evidence" value="ECO:0007669"/>
    <property type="project" value="TreeGrafter"/>
</dbReference>
<dbReference type="GO" id="GO:0003735">
    <property type="term" value="F:structural constituent of ribosome"/>
    <property type="evidence" value="ECO:0007669"/>
    <property type="project" value="InterPro"/>
</dbReference>
<dbReference type="GO" id="GO:0006412">
    <property type="term" value="P:translation"/>
    <property type="evidence" value="ECO:0007669"/>
    <property type="project" value="UniProtKB-UniRule"/>
</dbReference>
<dbReference type="FunFam" id="2.30.30.790:FF:000001">
    <property type="entry name" value="50S ribosomal protein L19"/>
    <property type="match status" value="1"/>
</dbReference>
<dbReference type="Gene3D" id="2.30.30.790">
    <property type="match status" value="1"/>
</dbReference>
<dbReference type="HAMAP" id="MF_00402">
    <property type="entry name" value="Ribosomal_bL19"/>
    <property type="match status" value="1"/>
</dbReference>
<dbReference type="InterPro" id="IPR001857">
    <property type="entry name" value="Ribosomal_bL19"/>
</dbReference>
<dbReference type="InterPro" id="IPR018257">
    <property type="entry name" value="Ribosomal_bL19_CS"/>
</dbReference>
<dbReference type="InterPro" id="IPR038657">
    <property type="entry name" value="Ribosomal_bL19_sf"/>
</dbReference>
<dbReference type="InterPro" id="IPR008991">
    <property type="entry name" value="Translation_prot_SH3-like_sf"/>
</dbReference>
<dbReference type="NCBIfam" id="TIGR01024">
    <property type="entry name" value="rplS_bact"/>
    <property type="match status" value="1"/>
</dbReference>
<dbReference type="PANTHER" id="PTHR15680:SF9">
    <property type="entry name" value="LARGE RIBOSOMAL SUBUNIT PROTEIN BL19M"/>
    <property type="match status" value="1"/>
</dbReference>
<dbReference type="PANTHER" id="PTHR15680">
    <property type="entry name" value="RIBOSOMAL PROTEIN L19"/>
    <property type="match status" value="1"/>
</dbReference>
<dbReference type="Pfam" id="PF01245">
    <property type="entry name" value="Ribosomal_L19"/>
    <property type="match status" value="1"/>
</dbReference>
<dbReference type="PIRSF" id="PIRSF002191">
    <property type="entry name" value="Ribosomal_L19"/>
    <property type="match status" value="1"/>
</dbReference>
<dbReference type="PRINTS" id="PR00061">
    <property type="entry name" value="RIBOSOMALL19"/>
</dbReference>
<dbReference type="SUPFAM" id="SSF50104">
    <property type="entry name" value="Translation proteins SH3-like domain"/>
    <property type="match status" value="1"/>
</dbReference>
<dbReference type="PROSITE" id="PS01015">
    <property type="entry name" value="RIBOSOMAL_L19"/>
    <property type="match status" value="1"/>
</dbReference>
<proteinExistence type="inferred from homology"/>